<gene>
    <name type="primary">LYZ</name>
    <name type="synonym">LZM</name>
</gene>
<reference key="1">
    <citation type="journal article" date="1997" name="Nature">
        <title>Episodic adaptive evolution of primate lysozymes.</title>
        <authorList>
            <person name="Messier W."/>
            <person name="Stewart C.B."/>
        </authorList>
    </citation>
    <scope>NUCLEOTIDE SEQUENCE [MRNA]</scope>
    <source>
        <tissue>Blood</tissue>
        <tissue>Stomach</tissue>
    </source>
</reference>
<sequence>MRALIILGLVLLSVTVQGKIFERCELARTLKKLGLDGYKGVSLANWVCLAKWESGYNTEATNYNPGDESTDYGIFQINSRYWCNNGKTPGAVDACHISCSALLQNNIADAVACAKRVVSDPQGIRAWVAWRNHCQNKDVSQYVKGCGV</sequence>
<keyword id="KW-0929">Antimicrobial</keyword>
<keyword id="KW-0081">Bacteriolytic enzyme</keyword>
<keyword id="KW-0222">Digestion</keyword>
<keyword id="KW-1015">Disulfide bond</keyword>
<keyword id="KW-0326">Glycosidase</keyword>
<keyword id="KW-0378">Hydrolase</keyword>
<keyword id="KW-0964">Secreted</keyword>
<keyword id="KW-0732">Signal</keyword>
<feature type="signal peptide" evidence="1">
    <location>
        <begin position="1"/>
        <end position="18"/>
    </location>
</feature>
<feature type="chain" id="PRO_0000018490" description="Lysozyme C">
    <location>
        <begin position="19"/>
        <end position="148"/>
    </location>
</feature>
<feature type="domain" description="C-type lysozyme" evidence="2">
    <location>
        <begin position="19"/>
        <end position="148"/>
    </location>
</feature>
<feature type="active site" evidence="2">
    <location>
        <position position="53"/>
    </location>
</feature>
<feature type="active site" evidence="2">
    <location>
        <position position="71"/>
    </location>
</feature>
<feature type="disulfide bond" evidence="2">
    <location>
        <begin position="24"/>
        <end position="146"/>
    </location>
</feature>
<feature type="disulfide bond" evidence="2">
    <location>
        <begin position="48"/>
        <end position="134"/>
    </location>
</feature>
<feature type="disulfide bond" evidence="2">
    <location>
        <begin position="83"/>
        <end position="99"/>
    </location>
</feature>
<feature type="disulfide bond" evidence="2">
    <location>
        <begin position="95"/>
        <end position="113"/>
    </location>
</feature>
<comment type="function">
    <text>Lysozymes have primarily a bacteriolytic function; those in tissues and body fluids are associated with the monocyte-macrophage system and enhance the activity of immunoagents. Also plays a role in digestion in this species.</text>
</comment>
<comment type="catalytic activity">
    <reaction>
        <text>Hydrolysis of (1-&gt;4)-beta-linkages between N-acetylmuramic acid and N-acetyl-D-glucosamine residues in a peptidoglycan and between N-acetyl-D-glucosamine residues in chitodextrins.</text>
        <dbReference type="EC" id="3.2.1.17"/>
    </reaction>
</comment>
<comment type="subunit">
    <text>Monomer.</text>
</comment>
<comment type="subcellular location">
    <subcellularLocation>
        <location evidence="1">Secreted</location>
    </subcellularLocation>
</comment>
<comment type="miscellaneous">
    <text>Lysozyme C is capable of both hydrolysis and transglycosylation; it also shows a slight esterase activity. It acts rapidly on both peptide-substituted and unsubstituted peptidoglycan, and slowly on chitin oligosaccharides.</text>
</comment>
<comment type="similarity">
    <text evidence="2">Belongs to the glycosyl hydrolase 22 family.</text>
</comment>
<accession>P67980</accession>
<accession>P87493</accession>
<evidence type="ECO:0000250" key="1"/>
<evidence type="ECO:0000255" key="2">
    <source>
        <dbReference type="PROSITE-ProRule" id="PRU00680"/>
    </source>
</evidence>
<proteinExistence type="evidence at transcript level"/>
<protein>
    <recommendedName>
        <fullName>Lysozyme C</fullName>
        <ecNumber>3.2.1.17</ecNumber>
    </recommendedName>
    <alternativeName>
        <fullName>1,4-beta-N-acetylmuramidase C</fullName>
    </alternativeName>
</protein>
<name>LYSC_TRAFR</name>
<dbReference type="EC" id="3.2.1.17"/>
<dbReference type="EMBL" id="U76918">
    <property type="protein sequence ID" value="AAB41212.1"/>
    <property type="molecule type" value="mRNA"/>
</dbReference>
<dbReference type="RefSeq" id="XP_033077206.1">
    <property type="nucleotide sequence ID" value="XM_033221315.1"/>
</dbReference>
<dbReference type="SMR" id="P67980"/>
<dbReference type="GeneID" id="117089765"/>
<dbReference type="GO" id="GO:0005576">
    <property type="term" value="C:extracellular region"/>
    <property type="evidence" value="ECO:0007669"/>
    <property type="project" value="UniProtKB-SubCell"/>
</dbReference>
<dbReference type="GO" id="GO:0003796">
    <property type="term" value="F:lysozyme activity"/>
    <property type="evidence" value="ECO:0007669"/>
    <property type="project" value="UniProtKB-EC"/>
</dbReference>
<dbReference type="GO" id="GO:0050829">
    <property type="term" value="P:defense response to Gram-negative bacterium"/>
    <property type="evidence" value="ECO:0007669"/>
    <property type="project" value="TreeGrafter"/>
</dbReference>
<dbReference type="GO" id="GO:0050830">
    <property type="term" value="P:defense response to Gram-positive bacterium"/>
    <property type="evidence" value="ECO:0007669"/>
    <property type="project" value="TreeGrafter"/>
</dbReference>
<dbReference type="GO" id="GO:0007586">
    <property type="term" value="P:digestion"/>
    <property type="evidence" value="ECO:0007669"/>
    <property type="project" value="UniProtKB-KW"/>
</dbReference>
<dbReference type="GO" id="GO:0031640">
    <property type="term" value="P:killing of cells of another organism"/>
    <property type="evidence" value="ECO:0007669"/>
    <property type="project" value="UniProtKB-KW"/>
</dbReference>
<dbReference type="CDD" id="cd16897">
    <property type="entry name" value="LYZ_C"/>
    <property type="match status" value="1"/>
</dbReference>
<dbReference type="FunFam" id="1.10.530.10:FF:000001">
    <property type="entry name" value="Lysozyme C"/>
    <property type="match status" value="1"/>
</dbReference>
<dbReference type="Gene3D" id="1.10.530.10">
    <property type="match status" value="1"/>
</dbReference>
<dbReference type="InterPro" id="IPR001916">
    <property type="entry name" value="Glyco_hydro_22"/>
</dbReference>
<dbReference type="InterPro" id="IPR019799">
    <property type="entry name" value="Glyco_hydro_22_CS"/>
</dbReference>
<dbReference type="InterPro" id="IPR000974">
    <property type="entry name" value="Glyco_hydro_22_lys"/>
</dbReference>
<dbReference type="InterPro" id="IPR023346">
    <property type="entry name" value="Lysozyme-like_dom_sf"/>
</dbReference>
<dbReference type="PANTHER" id="PTHR11407">
    <property type="entry name" value="LYSOZYME C"/>
    <property type="match status" value="1"/>
</dbReference>
<dbReference type="PANTHER" id="PTHR11407:SF28">
    <property type="entry name" value="LYSOZYME C"/>
    <property type="match status" value="1"/>
</dbReference>
<dbReference type="Pfam" id="PF00062">
    <property type="entry name" value="Lys"/>
    <property type="match status" value="1"/>
</dbReference>
<dbReference type="PRINTS" id="PR00137">
    <property type="entry name" value="LYSOZYME"/>
</dbReference>
<dbReference type="PRINTS" id="PR00135">
    <property type="entry name" value="LYZLACT"/>
</dbReference>
<dbReference type="SMART" id="SM00263">
    <property type="entry name" value="LYZ1"/>
    <property type="match status" value="1"/>
</dbReference>
<dbReference type="SUPFAM" id="SSF53955">
    <property type="entry name" value="Lysozyme-like"/>
    <property type="match status" value="1"/>
</dbReference>
<dbReference type="PROSITE" id="PS00128">
    <property type="entry name" value="GLYCOSYL_HYDROL_F22_1"/>
    <property type="match status" value="1"/>
</dbReference>
<dbReference type="PROSITE" id="PS51348">
    <property type="entry name" value="GLYCOSYL_HYDROL_F22_2"/>
    <property type="match status" value="1"/>
</dbReference>
<organism>
    <name type="scientific">Trachypithecus francoisi</name>
    <name type="common">Francois' leaf monkey</name>
    <name type="synonym">Presbytis francoisi</name>
    <dbReference type="NCBI Taxonomy" id="54180"/>
    <lineage>
        <taxon>Eukaryota</taxon>
        <taxon>Metazoa</taxon>
        <taxon>Chordata</taxon>
        <taxon>Craniata</taxon>
        <taxon>Vertebrata</taxon>
        <taxon>Euteleostomi</taxon>
        <taxon>Mammalia</taxon>
        <taxon>Eutheria</taxon>
        <taxon>Euarchontoglires</taxon>
        <taxon>Primates</taxon>
        <taxon>Haplorrhini</taxon>
        <taxon>Catarrhini</taxon>
        <taxon>Cercopithecidae</taxon>
        <taxon>Colobinae</taxon>
        <taxon>Trachypithecus</taxon>
    </lineage>
</organism>